<evidence type="ECO:0000250" key="1">
    <source>
        <dbReference type="UniProtKB" id="A1T557"/>
    </source>
</evidence>
<evidence type="ECO:0000250" key="2">
    <source>
        <dbReference type="UniProtKB" id="Q9Y5U4"/>
    </source>
</evidence>
<evidence type="ECO:0000305" key="3"/>
<sequence>MGETDNAPRGPPSFLPHKMNLLLRGLLLFLIGVFLALVLNLLQVQRNVTLFPPDVLSSLFSSAWWVPLCCGTAAAAIGLLYPCIDRHLGEPHKFKREWSSVMRCVAVFVGINHASAKVDFANNTQLSLTLAALSIGLWWTFDRSRSGLGLGIGISFFATVVSQLLVYNGVYEYTAPDFLYVRSWLPCIFFAGGITMGNIGRQLEMYERLALVEKSHRD</sequence>
<gene>
    <name evidence="2" type="primary">insig2</name>
</gene>
<proteinExistence type="evidence at transcript level"/>
<comment type="function">
    <text evidence="2">Oxysterol-binding protein that mediates feedback control of cholesterol synthesis by controlling both endoplasmic reticulum to Golgi transport of scap and degradation of hmgcr. Acts as a negative regulator of cholesterol biosynthesis by mediating the retention of the SCAP-SREBP complex in the endoplasmic reticulum, thereby blocking the processing of sterol regulatory element-binding proteins (SREBPs). Binds oxysterol, including 22-hydroxycholesterol, 24-hydroxycholesterol, 25-hydroxycholesterol and 27-hydroxycholesterol, regulating interaction with scap and retention of the SCAP-SREBP complex in the endoplasmic reticulum. In presence of oxysterol, interacts with scap, retaining the SCAP-SREBP complex in the endoplasmic reticulum, thereby preventing scap from escorting SREBPs to the Golgi. Sterol deprivation reduce oxysterol-binding, disrupting the interaction between insig2 and scap, thereby promoting Golgi transport of the SCAP-SREBP complex, followed by processing and nuclear translocation of SREBPs. Also regulates cholesterol synthesis by regulating degradation of hmgcr.</text>
</comment>
<comment type="subunit">
    <text evidence="2">Interacts with scap; interaction is direct and only takes place in the presence of sterols; it prevents interaction between scap and the coat protein complex II (COPII). Associates with the SCAP-SREBP complex; association is mediated via its interaction with scap and only takes place in the presence of sterols.</text>
</comment>
<comment type="subcellular location">
    <subcellularLocation>
        <location evidence="2">Endoplasmic reticulum membrane</location>
        <topology evidence="2">Multi-pass membrane protein</topology>
    </subcellularLocation>
</comment>
<comment type="domain">
    <text evidence="2">Binds oxysterols in a pocket within their transmembrane domains and interacts with scap via transmembrane domains 3 and 4.</text>
</comment>
<comment type="domain">
    <text evidence="2">The KxHxx motif mediates association with the coatomer complex.</text>
</comment>
<comment type="similarity">
    <text evidence="3">Belongs to the INSIG family.</text>
</comment>
<name>INSI2_XENTR</name>
<feature type="chain" id="PRO_0000286804" description="Insulin-induced gene 2 protein">
    <location>
        <begin position="1"/>
        <end position="218"/>
    </location>
</feature>
<feature type="topological domain" description="Cytoplasmic" evidence="3">
    <location>
        <begin position="1"/>
        <end position="21"/>
    </location>
</feature>
<feature type="transmembrane region" description="Helical; Name=1" evidence="1">
    <location>
        <begin position="22"/>
        <end position="44"/>
    </location>
</feature>
<feature type="topological domain" description="Lumenal" evidence="3">
    <location>
        <begin position="45"/>
        <end position="63"/>
    </location>
</feature>
<feature type="transmembrane region" description="Helical; Name=2" evidence="1">
    <location>
        <begin position="64"/>
        <end position="81"/>
    </location>
</feature>
<feature type="topological domain" description="Cytoplasmic" evidence="3">
    <location>
        <begin position="82"/>
        <end position="96"/>
    </location>
</feature>
<feature type="transmembrane region" description="Helical; Name=3" evidence="1">
    <location>
        <begin position="97"/>
        <end position="119"/>
    </location>
</feature>
<feature type="topological domain" description="Lumenal" evidence="3">
    <location>
        <begin position="120"/>
        <end position="122"/>
    </location>
</feature>
<feature type="transmembrane region" description="Helical; Name=4" evidence="1">
    <location>
        <begin position="123"/>
        <end position="141"/>
    </location>
</feature>
<feature type="topological domain" description="Cytoplasmic" evidence="3">
    <location>
        <begin position="142"/>
        <end position="146"/>
    </location>
</feature>
<feature type="transmembrane region" description="Helical; Name=5" evidence="1">
    <location>
        <begin position="147"/>
        <end position="168"/>
    </location>
</feature>
<feature type="topological domain" description="Lumenal" evidence="3">
    <location>
        <begin position="169"/>
        <end position="182"/>
    </location>
</feature>
<feature type="transmembrane region" description="Helical; Name=6" evidence="1">
    <location>
        <begin position="183"/>
        <end position="200"/>
    </location>
</feature>
<feature type="topological domain" description="Cytoplasmic" evidence="3">
    <location>
        <begin position="201"/>
        <end position="218"/>
    </location>
</feature>
<feature type="short sequence motif" description="KxHxx" evidence="2">
    <location>
        <begin position="212"/>
        <end position="218"/>
    </location>
</feature>
<feature type="site" description="Required for the recognition of 25-hydroxycholesterol" evidence="2">
    <location>
        <position position="108"/>
    </location>
</feature>
<keyword id="KW-0153">Cholesterol metabolism</keyword>
<keyword id="KW-0256">Endoplasmic reticulum</keyword>
<keyword id="KW-0443">Lipid metabolism</keyword>
<keyword id="KW-0446">Lipid-binding</keyword>
<keyword id="KW-0472">Membrane</keyword>
<keyword id="KW-1185">Reference proteome</keyword>
<keyword id="KW-0753">Steroid metabolism</keyword>
<keyword id="KW-1207">Sterol metabolism</keyword>
<keyword id="KW-0812">Transmembrane</keyword>
<keyword id="KW-1133">Transmembrane helix</keyword>
<dbReference type="EMBL" id="BC084995">
    <property type="protein sequence ID" value="AAH84995.1"/>
    <property type="molecule type" value="mRNA"/>
</dbReference>
<dbReference type="RefSeq" id="NP_001011169.1">
    <property type="nucleotide sequence ID" value="NM_001011169.1"/>
</dbReference>
<dbReference type="SMR" id="Q5U4Q2"/>
<dbReference type="FunCoup" id="Q5U4Q2">
    <property type="interactions" value="711"/>
</dbReference>
<dbReference type="PaxDb" id="8364-ENSXETP00000032657"/>
<dbReference type="DNASU" id="496587"/>
<dbReference type="GeneID" id="496587"/>
<dbReference type="KEGG" id="xtr:496587"/>
<dbReference type="CTD" id="51141"/>
<dbReference type="Xenbase" id="XB-GENE-5777114">
    <property type="gene designation" value="insig2"/>
</dbReference>
<dbReference type="eggNOG" id="KOG4363">
    <property type="taxonomic scope" value="Eukaryota"/>
</dbReference>
<dbReference type="HOGENOM" id="CLU_092922_0_0_1"/>
<dbReference type="InParanoid" id="Q5U4Q2"/>
<dbReference type="OMA" id="LGESHEF"/>
<dbReference type="OrthoDB" id="205546at2759"/>
<dbReference type="PhylomeDB" id="Q5U4Q2"/>
<dbReference type="Proteomes" id="UP000008143">
    <property type="component" value="Chromosome 9"/>
</dbReference>
<dbReference type="GO" id="GO:0005789">
    <property type="term" value="C:endoplasmic reticulum membrane"/>
    <property type="evidence" value="ECO:0007669"/>
    <property type="project" value="UniProtKB-SubCell"/>
</dbReference>
<dbReference type="GO" id="GO:0008142">
    <property type="term" value="F:oxysterol binding"/>
    <property type="evidence" value="ECO:0000250"/>
    <property type="project" value="UniProtKB"/>
</dbReference>
<dbReference type="GO" id="GO:0006695">
    <property type="term" value="P:cholesterol biosynthetic process"/>
    <property type="evidence" value="ECO:0000250"/>
    <property type="project" value="UniProtKB"/>
</dbReference>
<dbReference type="GO" id="GO:0032933">
    <property type="term" value="P:SREBP signaling pathway"/>
    <property type="evidence" value="ECO:0000250"/>
    <property type="project" value="UniProtKB"/>
</dbReference>
<dbReference type="GO" id="GO:0036316">
    <property type="term" value="P:SREBP-SCAP complex retention in endoplasmic reticulum"/>
    <property type="evidence" value="ECO:0000250"/>
    <property type="project" value="UniProtKB"/>
</dbReference>
<dbReference type="InterPro" id="IPR025929">
    <property type="entry name" value="INSIG_fam"/>
</dbReference>
<dbReference type="PANTHER" id="PTHR15301">
    <property type="entry name" value="INSULIN-INDUCED GENE 1"/>
    <property type="match status" value="1"/>
</dbReference>
<dbReference type="PANTHER" id="PTHR15301:SF10">
    <property type="entry name" value="INSULIN-INDUCED GENE 2 PROTEIN"/>
    <property type="match status" value="1"/>
</dbReference>
<dbReference type="Pfam" id="PF07281">
    <property type="entry name" value="INSIG"/>
    <property type="match status" value="1"/>
</dbReference>
<protein>
    <recommendedName>
        <fullName evidence="2">Insulin-induced gene 2 protein</fullName>
        <shortName evidence="2">INSIG-2</shortName>
    </recommendedName>
</protein>
<accession>Q5U4Q2</accession>
<organism>
    <name type="scientific">Xenopus tropicalis</name>
    <name type="common">Western clawed frog</name>
    <name type="synonym">Silurana tropicalis</name>
    <dbReference type="NCBI Taxonomy" id="8364"/>
    <lineage>
        <taxon>Eukaryota</taxon>
        <taxon>Metazoa</taxon>
        <taxon>Chordata</taxon>
        <taxon>Craniata</taxon>
        <taxon>Vertebrata</taxon>
        <taxon>Euteleostomi</taxon>
        <taxon>Amphibia</taxon>
        <taxon>Batrachia</taxon>
        <taxon>Anura</taxon>
        <taxon>Pipoidea</taxon>
        <taxon>Pipidae</taxon>
        <taxon>Xenopodinae</taxon>
        <taxon>Xenopus</taxon>
        <taxon>Silurana</taxon>
    </lineage>
</organism>
<reference key="1">
    <citation type="submission" date="2004-10" db="EMBL/GenBank/DDBJ databases">
        <authorList>
            <consortium name="NIH - Xenopus Gene Collection (XGC) project"/>
        </authorList>
    </citation>
    <scope>NUCLEOTIDE SEQUENCE [LARGE SCALE MRNA]</scope>
    <source>
        <tissue>Embryo</tissue>
    </source>
</reference>